<name>NU6M_ARTSF</name>
<geneLocation type="mitochondrion"/>
<keyword id="KW-0249">Electron transport</keyword>
<keyword id="KW-0472">Membrane</keyword>
<keyword id="KW-0496">Mitochondrion</keyword>
<keyword id="KW-0520">NAD</keyword>
<keyword id="KW-0679">Respiratory chain</keyword>
<keyword id="KW-1278">Translocase</keyword>
<keyword id="KW-0812">Transmembrane</keyword>
<keyword id="KW-1133">Transmembrane helix</keyword>
<keyword id="KW-0813">Transport</keyword>
<keyword id="KW-0830">Ubiquinone</keyword>
<evidence type="ECO:0000250" key="1"/>
<evidence type="ECO:0000255" key="2"/>
<evidence type="ECO:0000305" key="3"/>
<proteinExistence type="inferred from homology"/>
<sequence>MLGSIVVISMFMLLMNHPLAFTLSLFVQTLLICVMLKNVSLWISLILFLIFLGGILVMFIYVSSLSANEKFAVDLTSFMWVVPTIVLSFLVLNKNFMFMSPSSGYLYPTDFVIINFNVNSLTMLAYSFMVVYLFLALLLVIDFLNSNKKPLRSMI</sequence>
<protein>
    <recommendedName>
        <fullName>NADH-ubiquinone oxidoreductase chain 6</fullName>
        <ecNumber>7.1.1.2</ecNumber>
    </recommendedName>
    <alternativeName>
        <fullName>NADH dehydrogenase subunit 6</fullName>
    </alternativeName>
</protein>
<dbReference type="EC" id="7.1.1.2"/>
<dbReference type="EMBL" id="X69067">
    <property type="protein sequence ID" value="CAA48816.1"/>
    <property type="molecule type" value="Genomic_DNA"/>
</dbReference>
<dbReference type="PIR" id="S60647">
    <property type="entry name" value="S60647"/>
</dbReference>
<dbReference type="RefSeq" id="NP_007118.1">
    <property type="nucleotide sequence ID" value="NC_001620.1"/>
</dbReference>
<dbReference type="SMR" id="Q37712"/>
<dbReference type="GeneID" id="807789"/>
<dbReference type="KEGG" id="afra:807789"/>
<dbReference type="CTD" id="4541"/>
<dbReference type="GO" id="GO:0031966">
    <property type="term" value="C:mitochondrial membrane"/>
    <property type="evidence" value="ECO:0007669"/>
    <property type="project" value="UniProtKB-SubCell"/>
</dbReference>
<dbReference type="GO" id="GO:0008137">
    <property type="term" value="F:NADH dehydrogenase (ubiquinone) activity"/>
    <property type="evidence" value="ECO:0007669"/>
    <property type="project" value="UniProtKB-EC"/>
</dbReference>
<organism>
    <name type="scientific">Artemia franciscana</name>
    <name type="common">Brine shrimp</name>
    <name type="synonym">Artemia sanfranciscana</name>
    <dbReference type="NCBI Taxonomy" id="6661"/>
    <lineage>
        <taxon>Eukaryota</taxon>
        <taxon>Metazoa</taxon>
        <taxon>Ecdysozoa</taxon>
        <taxon>Arthropoda</taxon>
        <taxon>Crustacea</taxon>
        <taxon>Branchiopoda</taxon>
        <taxon>Anostraca</taxon>
        <taxon>Artemiidae</taxon>
        <taxon>Artemia</taxon>
    </lineage>
</organism>
<reference key="1">
    <citation type="journal article" date="1994" name="J. Mol. Evol.">
        <title>Speciation in the Artemia genus: mitochondrial DNA analysis of bisexual and parthenogenetic brine shrimps.</title>
        <authorList>
            <person name="Perez M.L."/>
            <person name="Valverde J.R."/>
            <person name="Batuecas B."/>
            <person name="Amat F."/>
            <person name="Marco R."/>
            <person name="Garesse R."/>
        </authorList>
    </citation>
    <scope>NUCLEOTIDE SEQUENCE [GENOMIC DNA]</scope>
</reference>
<gene>
    <name type="primary">ND6</name>
    <name type="synonym">ND-6</name>
</gene>
<accession>Q37712</accession>
<comment type="function">
    <text evidence="1">Core subunit of the mitochondrial membrane respiratory chain NADH dehydrogenase (Complex I) that is believed to belong to the minimal assembly required for catalysis. Complex I functions in the transfer of electrons from NADH to the respiratory chain. The immediate electron acceptor for the enzyme is believed to be ubiquinone (By similarity).</text>
</comment>
<comment type="catalytic activity">
    <reaction>
        <text>a ubiquinone + NADH + 5 H(+)(in) = a ubiquinol + NAD(+) + 4 H(+)(out)</text>
        <dbReference type="Rhea" id="RHEA:29091"/>
        <dbReference type="Rhea" id="RHEA-COMP:9565"/>
        <dbReference type="Rhea" id="RHEA-COMP:9566"/>
        <dbReference type="ChEBI" id="CHEBI:15378"/>
        <dbReference type="ChEBI" id="CHEBI:16389"/>
        <dbReference type="ChEBI" id="CHEBI:17976"/>
        <dbReference type="ChEBI" id="CHEBI:57540"/>
        <dbReference type="ChEBI" id="CHEBI:57945"/>
        <dbReference type="EC" id="7.1.1.2"/>
    </reaction>
</comment>
<comment type="subcellular location">
    <subcellularLocation>
        <location evidence="3">Mitochondrion membrane</location>
        <topology evidence="3">Multi-pass membrane protein</topology>
    </subcellularLocation>
</comment>
<comment type="similarity">
    <text evidence="3">Belongs to the complex I subunit 6 family.</text>
</comment>
<feature type="chain" id="PRO_0000118243" description="NADH-ubiquinone oxidoreductase chain 6">
    <location>
        <begin position="1"/>
        <end position="155"/>
    </location>
</feature>
<feature type="transmembrane region" description="Helical" evidence="2">
    <location>
        <begin position="1"/>
        <end position="21"/>
    </location>
</feature>
<feature type="transmembrane region" description="Helical" evidence="2">
    <location>
        <begin position="42"/>
        <end position="62"/>
    </location>
</feature>
<feature type="transmembrane region" description="Helical" evidence="2">
    <location>
        <begin position="71"/>
        <end position="91"/>
    </location>
</feature>
<feature type="transmembrane region" description="Helical" evidence="2">
    <location>
        <begin position="121"/>
        <end position="141"/>
    </location>
</feature>